<reference key="1">
    <citation type="journal article" date="1995" name="J. Biol. Chem.">
        <title>Primary structure, functional expression, and chromosomal localization of the bumetanide-sensitive Na-K-Cl cotransporter in human colon.</title>
        <authorList>
            <person name="Payne J.A."/>
            <person name="Xu J.-C."/>
            <person name="Haas M."/>
            <person name="Lytle Y.C."/>
            <person name="Ward D."/>
            <person name="Forbush B. III"/>
        </authorList>
    </citation>
    <scope>NUCLEOTIDE SEQUENCE [MRNA] (ISOFORM 1)</scope>
    <scope>FUNCTION</scope>
    <scope>TRANSPORT ACTIVITY</scope>
    <scope>ACTIVITY REGULATION</scope>
    <scope>BIOPHYSICOCHEMICAL PROPERTIES</scope>
    <scope>SUBCELLULAR LOCATION</scope>
    <scope>TISSUE SPECIFICITY</scope>
    <source>
        <tissue>Colon</tissue>
    </source>
</reference>
<reference key="2">
    <citation type="journal article" date="2001" name="Anal. Biochem.">
        <title>Quantitation of Na(+)-K(+)-2Cl(-) cotransport splice variants in human tissues using kinetic polymerase chain reaction.</title>
        <authorList>
            <person name="Vibat C.R."/>
            <person name="Holland M.J."/>
            <person name="Kang J.J."/>
            <person name="Putney L.K."/>
            <person name="O'Donnell M.E."/>
        </authorList>
    </citation>
    <scope>NUCLEOTIDE SEQUENCE [MRNA] OF 740-1066 (ISOFORM 2)</scope>
    <source>
        <tissue>Eye</tissue>
    </source>
</reference>
<reference key="3">
    <citation type="journal article" date="2002" name="J. Biol. Chem.">
        <title>Activation of the Na-K-Cl cotransporter NKCC1 detected with a phospho-specific antibody.</title>
        <authorList>
            <person name="Flemmer A.W."/>
            <person name="Gimenez I."/>
            <person name="Dowd B.F."/>
            <person name="Darman R.B."/>
            <person name="Forbush B."/>
        </authorList>
    </citation>
    <scope>PHOSPHORYLATION AT THR-212 AND THR-217</scope>
</reference>
<reference key="4">
    <citation type="journal article" date="2006" name="Biochem. J.">
        <title>Functional interactions of the SPAK/OSR1 kinases with their upstream activator WNK1 and downstream substrate NKCC1.</title>
        <authorList>
            <person name="Vitari A.C."/>
            <person name="Thastrup J."/>
            <person name="Rafiqi F.H."/>
            <person name="Deak M."/>
            <person name="Morrice N.A."/>
            <person name="Karlsson H.K."/>
            <person name="Alessi D.R."/>
        </authorList>
    </citation>
    <scope>PHOSPHORYLATION AT THR-203; THR-207 AND THR-212</scope>
    <scope>FUNCTION</scope>
    <scope>ACTIVITY REGULATION</scope>
    <scope>DOMAIN</scope>
</reference>
<reference key="5">
    <citation type="journal article" date="2006" name="Proc. Natl. Acad. Sci. U.S.A.">
        <title>WNK1 and OSR1 regulate the Na+, K+, 2Cl- cotransporter in HeLa cells.</title>
        <authorList>
            <person name="Anselmo A.N."/>
            <person name="Earnest S."/>
            <person name="Chen W."/>
            <person name="Juang Y.C."/>
            <person name="Kim S.C."/>
            <person name="Zhao Y."/>
            <person name="Cobb M.H."/>
        </authorList>
    </citation>
    <scope>ACTIVITY REGULATION</scope>
</reference>
<reference key="6">
    <citation type="journal article" date="2008" name="J. Proteome Res.">
        <title>Combining protein-based IMAC, peptide-based IMAC, and MudPIT for efficient phosphoproteomic analysis.</title>
        <authorList>
            <person name="Cantin G.T."/>
            <person name="Yi W."/>
            <person name="Lu B."/>
            <person name="Park S.K."/>
            <person name="Xu T."/>
            <person name="Lee J.-D."/>
            <person name="Yates J.R. III"/>
        </authorList>
    </citation>
    <scope>IDENTIFICATION BY MASS SPECTROMETRY [LARGE SCALE ANALYSIS]</scope>
    <source>
        <tissue>Cervix carcinoma</tissue>
    </source>
</reference>
<reference key="7">
    <citation type="journal article" date="2008" name="Proc. Natl. Acad. Sci. U.S.A.">
        <title>A quantitative atlas of mitotic phosphorylation.</title>
        <authorList>
            <person name="Dephoure N."/>
            <person name="Zhou C."/>
            <person name="Villen J."/>
            <person name="Beausoleil S.A."/>
            <person name="Bakalarski C.E."/>
            <person name="Elledge S.J."/>
            <person name="Gygi S.P."/>
        </authorList>
    </citation>
    <scope>PHOSPHORYLATION [LARGE SCALE ANALYSIS] AT SER-77 AND SER-79</scope>
    <scope>IDENTIFICATION BY MASS SPECTROMETRY [LARGE SCALE ANALYSIS]</scope>
    <source>
        <tissue>Cervix carcinoma</tissue>
    </source>
</reference>
<reference key="8">
    <citation type="journal article" date="2011" name="Am. J. Physiol.">
        <title>Similar Effects of all WNK3 Variants upon SLC12 Cotransporters.</title>
        <authorList>
            <person name="Cruz-Rangel S."/>
            <person name="Melo Z."/>
            <person name="Vazquez N."/>
            <person name="Meade P."/>
            <person name="Bobadilla N.A."/>
            <person name="Pasantes-Morales H."/>
            <person name="Gamba G."/>
            <person name="Mercado A."/>
        </authorList>
    </citation>
    <scope>ACTIVITY REGULATION</scope>
</reference>
<reference key="9">
    <citation type="journal article" date="2012" name="Mol. Cell. Proteomics">
        <title>Comparative large-scale characterisation of plant vs. mammal proteins reveals similar and idiosyncratic N-alpha acetylation features.</title>
        <authorList>
            <person name="Bienvenut W.V."/>
            <person name="Sumpton D."/>
            <person name="Martinez A."/>
            <person name="Lilla S."/>
            <person name="Espagne C."/>
            <person name="Meinnel T."/>
            <person name="Giglione C."/>
        </authorList>
    </citation>
    <scope>ACETYLATION [LARGE SCALE ANALYSIS] AT MET-1</scope>
    <scope>IDENTIFICATION BY MASS SPECTROMETRY [LARGE SCALE ANALYSIS]</scope>
</reference>
<reference key="10">
    <citation type="journal article" date="2013" name="J. Proteome Res.">
        <title>Toward a comprehensive characterization of a human cancer cell phosphoproteome.</title>
        <authorList>
            <person name="Zhou H."/>
            <person name="Di Palma S."/>
            <person name="Preisinger C."/>
            <person name="Peng M."/>
            <person name="Polat A.N."/>
            <person name="Heck A.J."/>
            <person name="Mohammed S."/>
        </authorList>
    </citation>
    <scope>PHOSPHORYLATION [LARGE SCALE ANALYSIS] AT SER-77; THR-217; SER-940 AND SER-994</scope>
    <scope>IDENTIFICATION BY MASS SPECTROMETRY [LARGE SCALE ANALYSIS]</scope>
    <source>
        <tissue>Cervix carcinoma</tissue>
        <tissue>Erythroleukemia</tissue>
    </source>
</reference>
<reference evidence="27" key="11">
    <citation type="journal article" date="2020" name="Nat. Commun.">
        <title>Structure of the human cation-chloride cotransporter NKCC1 determined by single-particle electron cryo-microscopy.</title>
        <authorList>
            <person name="Yang X."/>
            <person name="Wang Q."/>
            <person name="Cao E."/>
        </authorList>
    </citation>
    <scope>STRUCTURE BY ELECTRON MICROSCOPY (3.46 ANGSTROMS) OF MUTANT ASN-289 AND ARG-351</scope>
    <scope>FUNCTION</scope>
    <scope>ACTIVITY REGULATION</scope>
    <scope>SUBUNIT</scope>
    <scope>SUBCELLULAR LOCATION</scope>
    <scope>TOPOLOGY</scope>
    <scope>MUTAGENESIS OF ARG-294</scope>
</reference>
<reference evidence="28" key="12">
    <citation type="journal article" date="2021" name="Commun. Biol.">
        <title>The structural basis of function and regulation of neuronal cotransporters NKCC1 and KCC2.</title>
        <authorList>
            <person name="Zhang S."/>
            <person name="Zhou J."/>
            <person name="Zhang Y."/>
            <person name="Liu T."/>
            <person name="Friedel P."/>
            <person name="Zhuo W."/>
            <person name="Somasekharan S."/>
            <person name="Roy K."/>
            <person name="Zhang L."/>
            <person name="Liu Y."/>
            <person name="Meng X."/>
            <person name="Deng H."/>
            <person name="Zeng W."/>
            <person name="Li G."/>
            <person name="Forbush B."/>
            <person name="Yang M."/>
        </authorList>
    </citation>
    <scope>STRUCTURE BY ELECTRON MICROSCOPY (3.52 ANGSTROMS)</scope>
    <scope>FUNCTION</scope>
    <scope>SUBUNIT</scope>
    <scope>TOPOLOGY</scope>
    <scope>MUTAGENESIS OF ARG-307; ARG-358; GLU-389; THR-486; PHE-487; PHE-488; SER-489; VAL-490; PHE-491; ALA-492; ILE-493; PHE-494; PHE-495; ALA-497; ALA-498; THR-499; GLY-500; ILE-501; LEU-502; ALA-503; GLY-504; ALA-505; ASN-506; ILE-507; ASP-510; SER-613; SER-614; LYS-624; ASP-632; GLU-670 AND LEU-671</scope>
</reference>
<reference evidence="36" key="13">
    <citation type="journal article" date="2022" name="EMBO J.">
        <title>Cryo-EM structure of the human NKCC1 transporter reveals mechanisms of ion coupling and specificity.</title>
        <authorList>
            <person name="Neumann C."/>
            <person name="Rosenbaek L.L."/>
            <person name="Flygaard R.K."/>
            <person name="Habeck M."/>
            <person name="Karlsen J.L."/>
            <person name="Wang Y."/>
            <person name="Lindorff-Larsen K."/>
            <person name="Gad H.H."/>
            <person name="Hartmann R."/>
            <person name="Lyons J.A."/>
            <person name="Fenton R.A."/>
            <person name="Nissen P."/>
        </authorList>
    </citation>
    <scope>STRUCTURE BY ELECTRON MICROSCOPY (2.55 ANGSTROMS) OF 2-1212 IN COMPLEX WITH POTASSIUM; SODIUM AND CHLORIDE</scope>
    <scope>FUNCTION</scope>
    <scope>ACTIVITY REGULATION</scope>
    <scope>SUBUNIT</scope>
    <scope>TOPOLOGY</scope>
    <scope>MUTAGENESIS OF TYR-383; GLU-429; GLU-431; PHE-487; TYR-533 AND TYR-686</scope>
</reference>
<reference evidence="31 32 33" key="14">
    <citation type="journal article" date="2022" name="Nat. Commun.">
        <title>Structural basis for inhibition of the Cation-chloride cotransporter NKCC1 by the diuretic drug bumetanide.</title>
        <authorList>
            <person name="Zhao Y."/>
            <person name="Roy K."/>
            <person name="Vidossich P."/>
            <person name="Cancedda L."/>
            <person name="De Vivo M."/>
            <person name="Forbush B."/>
            <person name="Cao E."/>
        </authorList>
    </citation>
    <scope>STRUCTURE BY ELECTRON MICROSCOPY (2.90 ANGSTROMS) OF 2-1212 OF MUTANT ASN-289; GLU-492 AND CYS-671 IN COMPLEXES WITH POTASSIUM; CHLORIDE AND INHIBITOR BUMETANIDE</scope>
    <scope>FUNCTION</scope>
    <scope>ACTIVITY REGULATION</scope>
    <scope>SUBUNIT</scope>
    <scope>TOPOLOGY</scope>
    <scope>MUTAGENESIS OF THR-217; ASP-219; GLY-235; 236-GLU--GLU-249; LYS-237; LEU-238; ARG-240; PRO-241; SER-242; LEU-243; ALA-244; LEU-246; HIS-247; ASP-248; LEU-250; LYS-252; LYS-289; GLY-301; ALA-492; THR-499; LEU-671; PHE-682; ASP-1031; ARG-1174 AND ARG-1201</scope>
</reference>
<reference evidence="29 30 34 35 37" key="15">
    <citation type="journal article" date="2022" name="Sci. Adv.">
        <title>Inhibition mechanism of NKCC1 involves the carboxyl terminus and long-range conformational coupling.</title>
        <authorList>
            <person name="Moseng M.A."/>
            <person name="Su C.C."/>
            <person name="Rios K."/>
            <person name="Cui M."/>
            <person name="Lyu M."/>
            <person name="Glaza P."/>
            <person name="Klenotic P.A."/>
            <person name="Delpire E."/>
            <person name="Yu E.W."/>
        </authorList>
    </citation>
    <scope>STRUCTURE BY ELECTRON MICROSCOPY (3.28 ANGSTROMS) IN COMPLEXES WITH POTASSIUM; CHLORIDE; INHIBITORS FUROSEMIDE AND BUMETANIDE</scope>
    <scope>FUNCTION</scope>
    <scope>ACTIVITY REGULATION</scope>
    <scope>SUBUNIT</scope>
    <scope>TOPOLOGY</scope>
</reference>
<reference key="16">
    <citation type="journal article" date="2019" name="Hum. Mutat.">
        <title>Kilquist syndrome: A novel syndromic hearing loss disorder caused by homozygous deletion of SLC12A2.</title>
        <authorList>
            <consortium name="Undiagnosed Diseases Network"/>
            <person name="Macnamara E.F."/>
            <person name="Koehler A.E."/>
            <person name="D'Souza P."/>
            <person name="Estwick T."/>
            <person name="Lee P."/>
            <person name="Vezina G."/>
            <person name="Fauni H."/>
            <person name="Braddock S.R."/>
            <person name="Torti E."/>
            <person name="Holt J.M."/>
            <person name="Sharma P."/>
            <person name="Malicdan M.C.V."/>
            <person name="Tifft C.J."/>
        </authorList>
    </citation>
    <scope>INVOLVEMENT IN KILQS</scope>
</reference>
<reference key="17">
    <citation type="journal article" date="2020" name="Brain">
        <title>SLC12A2 variants cause a neurodevelopmental disorder or cochleovestibular defect.</title>
        <authorList>
            <person name="McNeill A."/>
            <person name="Iovino E."/>
            <person name="Mansard L."/>
            <person name="Vache C."/>
            <person name="Baux D."/>
            <person name="Bedoukian E."/>
            <person name="Cox H."/>
            <person name="Dean J."/>
            <person name="Goudie D."/>
            <person name="Kumar A."/>
            <person name="Newbury-Ecob R."/>
            <person name="Fallerini C."/>
            <person name="Renieri A."/>
            <person name="Lopergolo D."/>
            <person name="Mari F."/>
            <person name="Blanchet C."/>
            <person name="Willems M."/>
            <person name="Roux A.F."/>
            <person name="Pippucci T."/>
            <person name="Delpire E."/>
        </authorList>
    </citation>
    <scope>INVOLVEMENT IN DFNA78</scope>
    <scope>INVOLVEMENT IN DELMNES</scope>
    <scope>VARIANTS DELMNES VAL-327; ILE-376; LEU-379; GLN-410; 892-TRP--SER-1212 DEL AND LYS-980</scope>
    <scope>VARIANT DFNA78 LYS-979</scope>
</reference>
<reference key="18">
    <citation type="journal article" date="2020" name="Neurol. Genet.">
        <title>SLC12A2 mutations cause NKCC1 deficiency with encephalopathy and impaired secretory epithelia.</title>
        <authorList>
            <person name="Stoedberg T."/>
            <person name="Magnusson M."/>
            <person name="Lesko N."/>
            <person name="Wredenberg A."/>
            <person name="Martin Munoz D."/>
            <person name="Stranneheim H."/>
            <person name="Wedell A."/>
        </authorList>
    </citation>
    <scope>INVOLVEMENT IN KILQS</scope>
</reference>
<reference key="19">
    <citation type="journal article" date="2020" name="PLoS Genet.">
        <title>Variants encoding a restricted carboxy-terminal domain of SLC12A2 cause hereditary hearing loss in humans.</title>
        <authorList>
            <person name="Mutai H."/>
            <person name="Wasano K."/>
            <person name="Momozawa Y."/>
            <person name="Kamatani Y."/>
            <person name="Miya F."/>
            <person name="Masuda S."/>
            <person name="Morimoto N."/>
            <person name="Nara K."/>
            <person name="Takahashi S."/>
            <person name="Tsunoda T."/>
            <person name="Homma K."/>
            <person name="Kubo M."/>
            <person name="Matsunaga T."/>
        </authorList>
    </citation>
    <scope>INVOLVEMENT IN DFNA78</scope>
    <scope>FUNCTION</scope>
    <scope>VARIANTS DFNA78 LYS-979; TYR-981 AND THR-988</scope>
    <scope>CHARACTERIZATION OF VARIANTS DFNA78 TYR-981 AND THR-988</scope>
</reference>
<accession>P55011</accession>
<accession>Q8N713</accession>
<accession>Q8WWH7</accession>
<keyword id="KW-0002">3D-structure</keyword>
<keyword id="KW-0007">Acetylation</keyword>
<keyword id="KW-0025">Alternative splicing</keyword>
<keyword id="KW-1003">Cell membrane</keyword>
<keyword id="KW-0868">Chloride</keyword>
<keyword id="KW-0209">Deafness</keyword>
<keyword id="KW-0225">Disease variant</keyword>
<keyword id="KW-1015">Disulfide bond</keyword>
<keyword id="KW-0325">Glycoprotein</keyword>
<keyword id="KW-0991">Intellectual disability</keyword>
<keyword id="KW-0406">Ion transport</keyword>
<keyword id="KW-0472">Membrane</keyword>
<keyword id="KW-1010">Non-syndromic deafness</keyword>
<keyword id="KW-0597">Phosphoprotein</keyword>
<keyword id="KW-0630">Potassium</keyword>
<keyword id="KW-0633">Potassium transport</keyword>
<keyword id="KW-1267">Proteomics identification</keyword>
<keyword id="KW-1185">Reference proteome</keyword>
<keyword id="KW-0915">Sodium</keyword>
<keyword id="KW-0739">Sodium transport</keyword>
<keyword id="KW-0769">Symport</keyword>
<keyword id="KW-0812">Transmembrane</keyword>
<keyword id="KW-1133">Transmembrane helix</keyword>
<keyword id="KW-0813">Transport</keyword>
<sequence>MEPRPTAPSSGAPGLAGVGETPSAAALAAARVELPGTAVPSVPEDAAPASRDGGGVRDEGPAAAGDGLGRPLGPTPSQSRFQVDLVSENAGRAAAAAAAAAAAAAAAGAGAGAKQTPADGEASGESEPAKGSEEAKGRFRVNFVDPAASSSAEDSLSDAAGVGVDGPNVSFQNGGDTVLSEGSSLHSGGGGGSGHHQHYYYDTHTNTYYLRTFGHNTMDAVPRIDHYRHTAAQLGEKLLRPSLAELHDELEKEPFEDGFANGEESTPTRDAVVTYTAESKGVVKFGWIKGVLVRCMLNIWGVMLFIRLSWIVGQAGIGLSVLVIMMATVVTTITGLSTSAIATNGFVRGGGAYYLISRSLGPEFGGAIGLIFAFANAVAVAMYVVGFAETVVELLKEHSILMIDEINDIRIIGAITVVILLGISVAGMEWEAKAQIVLLVILLLAIGDFVIGTFIPLESKKPKGFFGYKSEIFNENFGPDFREEETFFSVFAIFFPAATGILAGANISGDLADPQSAIPKGTLLAILITTLVYVGIAVSVGSCVVRDATGNVNDTIVTELTNCTSAACKLNFDFSSCESSPCSYGLMNNFQVMSMVSGFTPLISAGIFSATLSSALASLVSAPKIFQALCKDNIYPAFQMFAKGYGKNNEPLRGYILTFLIALGFILIAELNVIAPIISNFFLASYALINFSVFHASLAKSPGWRPAFKYYNMWISLLGAILCCIVMFVINWWAALLTYVIVLGLYIYVTYKKPDVNWGSSTQALTYLNALQHSIRLSGVEDHVKNFRPQCLVMTGAPNSRPALLHLVHDFTKNVGLMICGHVHMGPRRQAMKEMSIDQAKYQRWLIKNKMKAFYAPVHADDLREGAQYLMQAAGLGRMKPNTLVLGFKKDWLQADMRDVDMYINLFHDAFDIQYGVVVIRLKEGLDISHLQGQEELLSSQEKSPGTKDVVVSVEYSKKSDLDTSKPLSEKPITHKVEEEDGKTATQPLLKKESKGPIVPLNVADQKLLEASTQFQKKQGKNTIDVWWLFDDGGLTLLIPYLLTTKKKWKDCKIRVFIGGKINRIDHDRRAMATLLSKFRIDFSDIMVLGDINTKPKKENIIAFEEIIEPYRLHEDDKEQDIADKMKEDEPWRITDNELELYKTKTYRQIRLNELLKEHSSTANIIVMSLPVARKGAVSSALYMAWLEALSKDLPPILLVRGNHQSVLTFYS</sequence>
<evidence type="ECO:0000250" key="1">
    <source>
        <dbReference type="UniProtKB" id="P55012"/>
    </source>
</evidence>
<evidence type="ECO:0000250" key="2">
    <source>
        <dbReference type="UniProtKB" id="P55016"/>
    </source>
</evidence>
<evidence type="ECO:0000255" key="3">
    <source>
        <dbReference type="PROSITE-ProRule" id="PRU00498"/>
    </source>
</evidence>
<evidence type="ECO:0000256" key="4">
    <source>
        <dbReference type="SAM" id="MobiDB-lite"/>
    </source>
</evidence>
<evidence type="ECO:0000269" key="5">
    <source>
    </source>
</evidence>
<evidence type="ECO:0000269" key="6">
    <source>
    </source>
</evidence>
<evidence type="ECO:0000269" key="7">
    <source>
    </source>
</evidence>
<evidence type="ECO:0000269" key="8">
    <source>
    </source>
</evidence>
<evidence type="ECO:0000269" key="9">
    <source>
    </source>
</evidence>
<evidence type="ECO:0000269" key="10">
    <source>
    </source>
</evidence>
<evidence type="ECO:0000269" key="11">
    <source>
    </source>
</evidence>
<evidence type="ECO:0000269" key="12">
    <source>
    </source>
</evidence>
<evidence type="ECO:0000269" key="13">
    <source>
    </source>
</evidence>
<evidence type="ECO:0000269" key="14">
    <source>
    </source>
</evidence>
<evidence type="ECO:0000269" key="15">
    <source>
    </source>
</evidence>
<evidence type="ECO:0000269" key="16">
    <source>
    </source>
</evidence>
<evidence type="ECO:0000269" key="17">
    <source>
    </source>
</evidence>
<evidence type="ECO:0000269" key="18">
    <source>
    </source>
</evidence>
<evidence type="ECO:0000303" key="19">
    <source>
    </source>
</evidence>
<evidence type="ECO:0000303" key="20">
    <source>
    </source>
</evidence>
<evidence type="ECO:0000303" key="21">
    <source>
    </source>
</evidence>
<evidence type="ECO:0000303" key="22">
    <source>
    </source>
</evidence>
<evidence type="ECO:0000305" key="23"/>
<evidence type="ECO:0000305" key="24">
    <source>
    </source>
</evidence>
<evidence type="ECO:0000305" key="25">
    <source>
    </source>
</evidence>
<evidence type="ECO:0000305" key="26">
    <source>
    </source>
</evidence>
<evidence type="ECO:0007744" key="27">
    <source>
        <dbReference type="PDB" id="6PZT"/>
    </source>
</evidence>
<evidence type="ECO:0007744" key="28">
    <source>
        <dbReference type="PDB" id="7D10"/>
    </source>
</evidence>
<evidence type="ECO:0007744" key="29">
    <source>
        <dbReference type="PDB" id="7MXO"/>
    </source>
</evidence>
<evidence type="ECO:0007744" key="30">
    <source>
        <dbReference type="PDB" id="7N3N"/>
    </source>
</evidence>
<evidence type="ECO:0007744" key="31">
    <source>
        <dbReference type="PDB" id="7S1X"/>
    </source>
</evidence>
<evidence type="ECO:0007744" key="32">
    <source>
        <dbReference type="PDB" id="7S1Y"/>
    </source>
</evidence>
<evidence type="ECO:0007744" key="33">
    <source>
        <dbReference type="PDB" id="7S1Z"/>
    </source>
</evidence>
<evidence type="ECO:0007744" key="34">
    <source>
        <dbReference type="PDB" id="7SFL"/>
    </source>
</evidence>
<evidence type="ECO:0007744" key="35">
    <source>
        <dbReference type="PDB" id="7SMP"/>
    </source>
</evidence>
<evidence type="ECO:0007744" key="36">
    <source>
        <dbReference type="PDB" id="7ZGO"/>
    </source>
</evidence>
<evidence type="ECO:0007744" key="37">
    <source>
        <dbReference type="PDB" id="8STE"/>
    </source>
</evidence>
<evidence type="ECO:0007744" key="38">
    <source>
    </source>
</evidence>
<evidence type="ECO:0007744" key="39">
    <source>
    </source>
</evidence>
<evidence type="ECO:0007744" key="40">
    <source>
    </source>
</evidence>
<evidence type="ECO:0007829" key="41">
    <source>
        <dbReference type="PDB" id="7MXO"/>
    </source>
</evidence>
<evidence type="ECO:0007829" key="42">
    <source>
        <dbReference type="PDB" id="7N3N"/>
    </source>
</evidence>
<evidence type="ECO:0007829" key="43">
    <source>
        <dbReference type="PDB" id="7S1X"/>
    </source>
</evidence>
<evidence type="ECO:0007829" key="44">
    <source>
        <dbReference type="PDB" id="7SMP"/>
    </source>
</evidence>
<evidence type="ECO:0007829" key="45">
    <source>
        <dbReference type="PDB" id="7ZGO"/>
    </source>
</evidence>
<evidence type="ECO:0007829" key="46">
    <source>
        <dbReference type="PDB" id="8STE"/>
    </source>
</evidence>
<comment type="function">
    <text evidence="6 10 11 14 15 16 17 18">Cation-chloride cotransporter which mediates the electroneutral transport of chloride, potassium and/or sodium ions across the membrane (PubMed:16669787, PubMed:32081947, PubMed:32294086, PubMed:33597714, PubMed:35585053, PubMed:36239040, PubMed:36306358, PubMed:7629105). Plays a vital role in the regulation of ionic balance and cell volume (PubMed:16669787, PubMed:32081947, PubMed:32294086, PubMed:7629105).</text>
</comment>
<comment type="catalytic activity">
    <reaction evidence="18">
        <text>K(+)(out) + 2 chloride(out) + Na(+)(out) = K(+)(in) + 2 chloride(in) + Na(+)(in)</text>
        <dbReference type="Rhea" id="RHEA:72395"/>
        <dbReference type="ChEBI" id="CHEBI:17996"/>
        <dbReference type="ChEBI" id="CHEBI:29101"/>
        <dbReference type="ChEBI" id="CHEBI:29103"/>
    </reaction>
    <physiologicalReaction direction="left-to-right" evidence="26">
        <dbReference type="Rhea" id="RHEA:72396"/>
    </physiologicalReaction>
</comment>
<comment type="activity regulation">
    <text evidence="6 7 8 10 15 16 17 18">Activated following phosphorylation by OXSR1/OSR1 and STK39/SPAK downstream of WNK kinases (WNK1, WNK2, WNK3 or WNK4) (PubMed:16669787, PubMed:16832045, PubMed:21613606). Inhibited by bumetanide (PubMed:32081947, PubMed:35585053, PubMed:36239040, PubMed:36306358, PubMed:7629105). Inhibited by furosemide (PubMed:36306358).</text>
</comment>
<comment type="biophysicochemical properties">
    <kinetics>
        <KM evidence="18">19.6 mM for Na(+)</KM>
        <KM evidence="18">2.68 mM for K(+)</KM>
        <KM evidence="18">26.5 mM for Cl(-)</KM>
    </kinetics>
</comment>
<comment type="subunit">
    <text evidence="10 15 16 17">Homodimer; adopts a domain-swap conformation at the scissor helices connecting the transmembrane domain and C-terminal domain.</text>
</comment>
<comment type="interaction">
    <interactant intactId="EBI-2801449">
        <id>P55011</id>
    </interactant>
    <interactant intactId="EBI-1056902">
        <id>P15311</id>
        <label>EZR</label>
    </interactant>
    <organismsDiffer>false</organismsDiffer>
    <experiments>3</experiments>
</comment>
<comment type="interaction">
    <interactant intactId="EBI-2801449">
        <id>P55011</id>
    </interactant>
    <interactant intactId="EBI-620853">
        <id>O95747</id>
        <label>OXSR1</label>
    </interactant>
    <organismsDiffer>false</organismsDiffer>
    <experiments>2</experiments>
</comment>
<comment type="subcellular location">
    <subcellularLocation>
        <location evidence="24 26">Basolateral cell membrane</location>
        <topology evidence="24 25">Multi-pass membrane protein</topology>
    </subcellularLocation>
</comment>
<comment type="alternative products">
    <event type="alternative splicing"/>
    <isoform>
        <id>P55011-1</id>
        <name>1</name>
        <sequence type="displayed"/>
    </isoform>
    <isoform>
        <id>P55011-3</id>
        <name>2</name>
        <sequence type="described" ref="VSP_006105"/>
    </isoform>
</comment>
<comment type="tissue specificity">
    <text evidence="18">Expressed in many tissues.</text>
</comment>
<comment type="domain">
    <text evidence="6">The RFXV motifs mediate binding with OXSR1/OSR1 and STK39/SPAK.</text>
</comment>
<comment type="PTM">
    <text evidence="6">Phosphorylated at Thr-203, Thr-207 and Thr-212 by OXSR1/OSR1 and STK39/SPAK downstream of WNK kinases (WNK1, WNK2, WNK3 or WNK4), promoting its activity.</text>
</comment>
<comment type="disease" evidence="11 12">
    <disease id="DI-05957">
        <name>Deafness, autosomal dominant, 78</name>
        <acronym>DFNA78</acronym>
        <description>A form of non-syndromic deafness characterized by congenital, profound bilateral sensorineural hearing loss affecting all frequencies. Some patients may have mild motor delay early in life due to vestibular dysfunction. Sensorineural hearing loss results from damage to the neural receptors of the inner ear, the nerve pathways to the brain, or the area of the brain that receives sound information.</description>
        <dbReference type="MIM" id="619081"/>
    </disease>
    <text>The disease is caused by variants affecting the gene represented in this entry.</text>
</comment>
<comment type="disease" evidence="12">
    <disease id="DI-05959">
        <name>Delpire-McNeill syndrome</name>
        <acronym>DELMNES</acronym>
        <description>An autosomal dominant neurodevelopmental disorder characterized by global developmental delay, hypotonia with delayed or absent walking, bilateral sensorineural deafness, poor or absent speech, and mild to severe intellectual disability. Additional variable features may include spasticity or minor involvement of other organ systems, such as hip dislocation or ventricular septal defect.</description>
        <dbReference type="MIM" id="619083"/>
    </disease>
    <text>The disease is caused by variants affecting the gene represented in this entry.</text>
</comment>
<comment type="disease" evidence="9 13">
    <disease id="DI-05956">
        <name>Kilquist syndrome</name>
        <acronym>KILQS</acronym>
        <description>An autosomal recessive, multisystem disorder characterized by severe global developmental delay, sensorineural hearing loss, poor overall growth, mild facial dysmorphism, gastrointestinal anomalies such as gastroesophageal reflux or midgut malrotation, and a striking lack of tear fluid, saliva, and sweat.</description>
        <dbReference type="MIM" id="619080"/>
    </disease>
    <text>The disease is caused by variants affecting the gene represented in this entry.</text>
</comment>
<comment type="similarity">
    <text evidence="23">Belongs to the SLC12A transporter family.</text>
</comment>
<feature type="chain" id="PRO_0000178023" description="Solute carrier family 12 member 2">
    <location>
        <begin position="1"/>
        <end position="1212"/>
    </location>
</feature>
<feature type="topological domain" description="Cytoplasmic" evidence="10 14 15 16 17 27 28 29 30 31 32 33 34 35 36 37">
    <location>
        <begin position="1"/>
        <end position="286"/>
    </location>
</feature>
<feature type="transmembrane region" description="Discontinuously helical; Name=1" evidence="10 14 15 16 17 27 28 29 30 31 32 33 34 35 36 37">
    <location>
        <begin position="287"/>
        <end position="316"/>
    </location>
</feature>
<feature type="transmembrane region" description="Helical; Name=2" evidence="10 14 15 16 17 27 28 29 30 31 32 33 34 35 36 37">
    <location>
        <begin position="317"/>
        <end position="336"/>
    </location>
</feature>
<feature type="topological domain" description="Cytoplasmic" evidence="10 14 15 16 17 27 28 29 30 31 32 33 34 35 36 37">
    <location>
        <begin position="337"/>
        <end position="367"/>
    </location>
</feature>
<feature type="transmembrane region" description="Helical; Name=3" evidence="10 14 15 16 17 27 28 29 30 31 32 33 34 35 36 37">
    <location>
        <begin position="368"/>
        <end position="395"/>
    </location>
</feature>
<feature type="topological domain" description="Extracellular" evidence="10 14 15 16 17 27 28 29 30 31 32 33 34 35 36 37">
    <location>
        <begin position="396"/>
        <end position="405"/>
    </location>
</feature>
<feature type="transmembrane region" description="Helical; Name=4" evidence="10 14 15 16 17 27 28 29 30 31 32 33 34 35 36 37">
    <location>
        <begin position="406"/>
        <end position="429"/>
    </location>
</feature>
<feature type="topological domain" description="Cytoplasmic" evidence="10 14 15 16 17 27 28 29 30 31 32 33 34 35 36 37">
    <location>
        <begin position="430"/>
        <end position="432"/>
    </location>
</feature>
<feature type="transmembrane region" description="Helical; Name=5" evidence="10 14 15 16 17 27 28 29 30 31 32 33 34 35 36 37">
    <location>
        <begin position="433"/>
        <end position="454"/>
    </location>
</feature>
<feature type="topological domain" description="Extracellular" evidence="10 14 15 16 17 27 28 29 30 31 32 33 34 35 36 37">
    <location>
        <begin position="455"/>
        <end position="486"/>
    </location>
</feature>
<feature type="transmembrane region" description="Discontinuously helical; Name=6" evidence="10 14 15 16 17 27 28 29 30 31 32 33 34 35 36 37">
    <location>
        <begin position="487"/>
        <end position="504"/>
    </location>
</feature>
<feature type="topological domain" description="Cytoplasmic" evidence="10 14 15 16 17 27 28 29 30 31 32 33 34 35 36 37">
    <location>
        <begin position="505"/>
        <end position="519"/>
    </location>
</feature>
<feature type="transmembrane region" description="Helical; Name=7" evidence="10 14 15 16 17 27 28 29 30 31 32 33 34 35 36 37">
    <location>
        <begin position="520"/>
        <end position="541"/>
    </location>
</feature>
<feature type="topological domain" description="Extracellular" evidence="10 14 15 16 17 27 28 29 30 31 32 33 34 35 36 37">
    <location>
        <begin position="542"/>
        <end position="598"/>
    </location>
</feature>
<feature type="transmembrane region" description="Helical; Name=8" evidence="10 14 15 16 17 27 28 29 30 31 32 33 34 35 36 37">
    <location>
        <begin position="599"/>
        <end position="623"/>
    </location>
</feature>
<feature type="topological domain" description="Cytoplasmic" evidence="10 14 15 16 17 27 28 29 30 31 32 33 34 35 36 37">
    <location>
        <begin position="624"/>
        <end position="651"/>
    </location>
</feature>
<feature type="transmembrane region" description="Helical; Name=9" evidence="10 14 15 16 17 27 28 29 30 31 32 33 34 35 36 37">
    <location>
        <begin position="652"/>
        <end position="672"/>
    </location>
</feature>
<feature type="transmembrane region" description="Helical; Name=10" evidence="10 14 15 16 17 27 28 29 30 31 32 33 34 35 36 37">
    <location>
        <begin position="673"/>
        <end position="691"/>
    </location>
</feature>
<feature type="topological domain" description="Cytoplasmic" evidence="10 14 15 16 17 27 28 29 30 31 32 33 34 35 36 37">
    <location>
        <begin position="692"/>
        <end position="714"/>
    </location>
</feature>
<feature type="transmembrane region" description="Helical; Name=11" evidence="10 14 15 16 17 27 28 29 30 31 32 33 34 35 36 37">
    <location>
        <begin position="715"/>
        <end position="732"/>
    </location>
</feature>
<feature type="transmembrane region" description="Helical; Name=12" evidence="10 14 15 16 17 27 28 29 30 31 32 33 34 35 36 37">
    <location>
        <begin position="733"/>
        <end position="745"/>
    </location>
</feature>
<feature type="topological domain" description="Cytoplasmic" evidence="10 14 15 16 17 27 28 29 30 31 32 33 34 35 36 37">
    <location>
        <begin position="746"/>
        <end position="1212"/>
    </location>
</feature>
<feature type="region of interest" description="Disordered" evidence="4">
    <location>
        <begin position="36"/>
        <end position="81"/>
    </location>
</feature>
<feature type="region of interest" description="Disordered" evidence="4">
    <location>
        <begin position="112"/>
        <end position="138"/>
    </location>
</feature>
<feature type="region of interest" description="Disordered" evidence="4">
    <location>
        <begin position="150"/>
        <end position="193"/>
    </location>
</feature>
<feature type="region of interest" description="Scissor helix" evidence="15 17 29 30 31 34 35">
    <location>
        <begin position="761"/>
        <end position="778"/>
    </location>
</feature>
<feature type="region of interest" description="Disordered" evidence="4">
    <location>
        <begin position="962"/>
        <end position="989"/>
    </location>
</feature>
<feature type="short sequence motif" description="RFXV motif 1" evidence="6">
    <location>
        <begin position="80"/>
        <end position="83"/>
    </location>
</feature>
<feature type="short sequence motif" description="RFXV motif 2" evidence="6">
    <location>
        <begin position="138"/>
        <end position="141"/>
    </location>
</feature>
<feature type="compositionally biased region" description="Basic and acidic residues" evidence="4">
    <location>
        <begin position="127"/>
        <end position="137"/>
    </location>
</feature>
<feature type="compositionally biased region" description="Low complexity" evidence="4">
    <location>
        <begin position="150"/>
        <end position="160"/>
    </location>
</feature>
<feature type="compositionally biased region" description="Basic and acidic residues" evidence="4">
    <location>
        <begin position="962"/>
        <end position="978"/>
    </location>
</feature>
<feature type="binding site" evidence="16 36">
    <location>
        <position position="297"/>
    </location>
    <ligand>
        <name>Na(+)</name>
        <dbReference type="ChEBI" id="CHEBI:29101"/>
    </ligand>
</feature>
<feature type="binding site" evidence="15 16 17 31 35 36">
    <location>
        <position position="298"/>
    </location>
    <ligand>
        <name>K(+)</name>
        <dbReference type="ChEBI" id="CHEBI:29103"/>
    </ligand>
</feature>
<feature type="binding site" evidence="15 16 17 29 31 35 36">
    <location>
        <position position="299"/>
    </location>
    <ligand>
        <name>K(+)</name>
        <dbReference type="ChEBI" id="CHEBI:29103"/>
    </ligand>
</feature>
<feature type="binding site" evidence="16 36">
    <location>
        <position position="300"/>
    </location>
    <ligand>
        <name>Na(+)</name>
        <dbReference type="ChEBI" id="CHEBI:29101"/>
    </ligand>
</feature>
<feature type="binding site" evidence="17 29">
    <location>
        <position position="301"/>
    </location>
    <ligand>
        <name>chloride</name>
        <dbReference type="ChEBI" id="CHEBI:17996"/>
        <label>1</label>
    </ligand>
</feature>
<feature type="binding site" evidence="16 17 29 36">
    <location>
        <position position="302"/>
    </location>
    <ligand>
        <name>chloride</name>
        <dbReference type="ChEBI" id="CHEBI:17996"/>
        <label>1</label>
    </ligand>
</feature>
<feature type="binding site" evidence="16 36">
    <location>
        <position position="303"/>
    </location>
    <ligand>
        <name>chloride</name>
        <dbReference type="ChEBI" id="CHEBI:17996"/>
        <label>1</label>
    </ligand>
</feature>
<feature type="binding site" evidence="15 32">
    <location>
        <position position="372"/>
    </location>
    <ligand>
        <name>chloride</name>
        <dbReference type="ChEBI" id="CHEBI:17996"/>
        <label>2</label>
    </ligand>
</feature>
<feature type="binding site" evidence="15 16 17 29 31 32 35 36">
    <location>
        <position position="383"/>
    </location>
    <ligand>
        <name>K(+)</name>
        <dbReference type="ChEBI" id="CHEBI:29103"/>
    </ligand>
</feature>
<feature type="binding site" evidence="17 29">
    <location>
        <position position="496"/>
    </location>
    <ligand>
        <name>chloride</name>
        <dbReference type="ChEBI" id="CHEBI:17996"/>
        <label>1</label>
    </ligand>
</feature>
<feature type="binding site" evidence="15 16 17 29 32 35 36">
    <location>
        <position position="496"/>
    </location>
    <ligand>
        <name>K(+)</name>
        <dbReference type="ChEBI" id="CHEBI:29103"/>
    </ligand>
</feature>
<feature type="binding site" evidence="16 36">
    <location>
        <position position="497"/>
    </location>
    <ligand>
        <name>chloride</name>
        <dbReference type="ChEBI" id="CHEBI:17996"/>
        <label>1</label>
    </ligand>
</feature>
<feature type="binding site" evidence="15 16 17 32 35 36">
    <location>
        <position position="497"/>
    </location>
    <ligand>
        <name>K(+)</name>
        <dbReference type="ChEBI" id="CHEBI:29103"/>
    </ligand>
</feature>
<feature type="binding site" evidence="15 16 17 29 31 35">
    <location>
        <position position="499"/>
    </location>
    <ligand>
        <name>K(+)</name>
        <dbReference type="ChEBI" id="CHEBI:29103"/>
    </ligand>
</feature>
<feature type="binding site" evidence="15 16 31 36">
    <location>
        <position position="500"/>
    </location>
    <ligand>
        <name>chloride</name>
        <dbReference type="ChEBI" id="CHEBI:17996"/>
        <label>2</label>
    </ligand>
</feature>
<feature type="binding site" evidence="15 16 31 36">
    <location>
        <position position="501"/>
    </location>
    <ligand>
        <name>chloride</name>
        <dbReference type="ChEBI" id="CHEBI:17996"/>
        <label>2</label>
    </ligand>
</feature>
<feature type="binding site" evidence="16 36">
    <location>
        <position position="610"/>
    </location>
    <ligand>
        <name>Na(+)</name>
        <dbReference type="ChEBI" id="CHEBI:29101"/>
    </ligand>
</feature>
<feature type="binding site" evidence="16 36">
    <location>
        <position position="613"/>
    </location>
    <ligand>
        <name>Na(+)</name>
        <dbReference type="ChEBI" id="CHEBI:29101"/>
    </ligand>
</feature>
<feature type="binding site" evidence="16 36">
    <location>
        <position position="614"/>
    </location>
    <ligand>
        <name>Na(+)</name>
        <dbReference type="ChEBI" id="CHEBI:29101"/>
    </ligand>
</feature>
<feature type="binding site" evidence="15 32">
    <location>
        <position position="682"/>
    </location>
    <ligand>
        <name>chloride</name>
        <dbReference type="ChEBI" id="CHEBI:17996"/>
        <label>2</label>
    </ligand>
</feature>
<feature type="binding site" evidence="15 16 31 32 36">
    <location>
        <position position="686"/>
    </location>
    <ligand>
        <name>chloride</name>
        <dbReference type="ChEBI" id="CHEBI:17996"/>
        <label>2</label>
    </ligand>
</feature>
<feature type="modified residue" description="N-acetylmethionine" evidence="39">
    <location>
        <position position="1"/>
    </location>
</feature>
<feature type="modified residue" description="Phosphoserine" evidence="38 40">
    <location>
        <position position="77"/>
    </location>
</feature>
<feature type="modified residue" description="Phosphoserine" evidence="38">
    <location>
        <position position="79"/>
    </location>
</feature>
<feature type="modified residue" description="Phosphothreonine; by OXSR1 and STK39" evidence="6">
    <location>
        <position position="203"/>
    </location>
</feature>
<feature type="modified residue" description="Phosphothreonine; by OXSR1 and STK39" evidence="6">
    <location>
        <position position="207"/>
    </location>
</feature>
<feature type="modified residue" description="Phosphothreonine; by OXSR1 and STK39" evidence="5 6">
    <location>
        <position position="212"/>
    </location>
</feature>
<feature type="modified residue" description="Phosphothreonine" evidence="5 40">
    <location>
        <position position="217"/>
    </location>
</feature>
<feature type="modified residue" description="Phosphothreonine" evidence="2">
    <location>
        <position position="230"/>
    </location>
</feature>
<feature type="modified residue" description="Phosphoserine" evidence="2">
    <location>
        <position position="242"/>
    </location>
</feature>
<feature type="modified residue" description="Phosphothreonine" evidence="1">
    <location>
        <position position="266"/>
    </location>
</feature>
<feature type="modified residue" description="Phosphoserine" evidence="40">
    <location>
        <position position="940"/>
    </location>
</feature>
<feature type="modified residue" description="Phosphoserine" evidence="1">
    <location>
        <position position="944"/>
    </location>
</feature>
<feature type="modified residue" description="Phosphoserine" evidence="40">
    <location>
        <position position="994"/>
    </location>
</feature>
<feature type="glycosylation site" description="N-linked (GlcNAc...) asparagine" evidence="3">
    <location>
        <position position="553"/>
    </location>
</feature>
<feature type="glycosylation site" description="N-linked (GlcNAc...) asparagine" evidence="3">
    <location>
        <position position="562"/>
    </location>
</feature>
<feature type="disulfide bond" evidence="10 27">
    <location>
        <begin position="563"/>
        <end position="568"/>
    </location>
</feature>
<feature type="disulfide bond" evidence="10 27">
    <location>
        <begin position="577"/>
        <end position="582"/>
    </location>
</feature>
<feature type="splice variant" id="VSP_006105" description="In isoform 2." evidence="19">
    <location>
        <begin position="976"/>
        <end position="991"/>
    </location>
</feature>
<feature type="sequence variant" id="VAR_085083" description="In DELMNES; dbSNP:rs1761279419." evidence="12">
    <original>A</original>
    <variation>V</variation>
    <location>
        <position position="327"/>
    </location>
</feature>
<feature type="sequence variant" id="VAR_085084" description="In DELMNES; dbSNP:rs116621105." evidence="12">
    <original>N</original>
    <variation>I</variation>
    <location>
        <position position="376"/>
    </location>
</feature>
<feature type="sequence variant" id="VAR_085085" description="In DELMNES; requires 2 nucleotide substitutions." evidence="12">
    <original>A</original>
    <variation>L</variation>
    <location>
        <position position="379"/>
    </location>
</feature>
<feature type="sequence variant" id="VAR_085086" description="In DELMNES; dbSNP:rs537215758." evidence="12">
    <original>R</original>
    <variation>Q</variation>
    <location>
        <position position="410"/>
    </location>
</feature>
<feature type="sequence variant" id="VAR_085087" description="In DELMNES." evidence="12">
    <location>
        <begin position="892"/>
        <end position="1212"/>
    </location>
</feature>
<feature type="sequence variant" id="VAR_085088" description="In DFNA78; dbSNP:rs1581138934." evidence="11 12">
    <original>E</original>
    <variation>K</variation>
    <location>
        <position position="979"/>
    </location>
</feature>
<feature type="sequence variant" id="VAR_085089" description="In DELMNES; dbSNP:rs1763563407." evidence="12">
    <original>E</original>
    <variation>K</variation>
    <location>
        <position position="980"/>
    </location>
</feature>
<feature type="sequence variant" id="VAR_085090" description="In DFNA78; reduced chloride transmembrane transport; dbSNP:rs1581138944." evidence="11">
    <original>D</original>
    <variation>Y</variation>
    <location>
        <position position="981"/>
    </location>
</feature>
<feature type="sequence variant" id="VAR_085091" description="In DFNA78; reduced chloride transmembrane transport; dbSNP:rs1581138965." evidence="11">
    <original>P</original>
    <variation>T</variation>
    <location>
        <position position="988"/>
    </location>
</feature>
<feature type="mutagenesis site" description="Impairs transporter activity." evidence="15">
    <original>T</original>
    <variation>A</variation>
    <variation>S</variation>
    <variation>E</variation>
    <location>
        <position position="217"/>
    </location>
</feature>
<feature type="mutagenesis site" description="Impairs transporter activity." evidence="15">
    <original>D</original>
    <variation>A</variation>
    <location>
        <position position="219"/>
    </location>
</feature>
<feature type="mutagenesis site" description="Impairs transporter activity." evidence="15">
    <original>G</original>
    <variation>A</variation>
    <location>
        <position position="235"/>
    </location>
</feature>
<feature type="mutagenesis site" description="Decrease in Cl(-) influx and impairs transporter activity." evidence="15">
    <original>EKLLRPSLAELHDE</original>
    <variation>PKVNRPALLEIHEQ</variation>
    <location>
        <begin position="236"/>
        <end position="249"/>
    </location>
</feature>
<feature type="mutagenesis site" description="Decrease in Cl(-) influx when mutated to the equivalent sequence in NKCC2." evidence="15">
    <original>EKLLRPSLAELHDE</original>
    <variation>PKVNRPSLLEIHEQ</variation>
    <location>
        <begin position="236"/>
        <end position="249"/>
    </location>
</feature>
<feature type="mutagenesis site" description="Impairs transporter activity." evidence="15">
    <original>K</original>
    <variation>A</variation>
    <location>
        <position position="237"/>
    </location>
</feature>
<feature type="mutagenesis site" description="Impairs transporter activity." evidence="15">
    <original>L</original>
    <variation>A</variation>
    <location>
        <position position="238"/>
    </location>
</feature>
<feature type="mutagenesis site" description="Impairs transporter activity." evidence="15">
    <original>R</original>
    <variation>A</variation>
    <location>
        <position position="240"/>
    </location>
</feature>
<feature type="mutagenesis site" description="Impairs transporter activity." evidence="15">
    <original>P</original>
    <variation>A</variation>
    <location>
        <position position="241"/>
    </location>
</feature>
<feature type="mutagenesis site" description="Impairs transporter activity." evidence="15">
    <original>S</original>
    <variation>A</variation>
    <variation>E</variation>
    <location>
        <position position="242"/>
    </location>
</feature>
<feature type="mutagenesis site" description="Abolishes transporter activity." evidence="15">
    <original>L</original>
    <variation>A</variation>
    <location>
        <position position="243"/>
    </location>
</feature>
<feature type="mutagenesis site" description="Impairs transporter activity." evidence="15">
    <original>A</original>
    <variation>E</variation>
    <location>
        <position position="244"/>
    </location>
</feature>
<feature type="mutagenesis site" description="Impairs transporter activity." evidence="15">
    <original>L</original>
    <variation>S</variation>
    <location>
        <position position="246"/>
    </location>
</feature>
<feature type="mutagenesis site" description="Impairs transporter activity." evidence="15">
    <original>H</original>
    <variation>A</variation>
    <location>
        <position position="247"/>
    </location>
</feature>
<feature type="mutagenesis site" description="Impairs transporter activity." evidence="15">
    <original>D</original>
    <variation>A</variation>
    <location>
        <position position="248"/>
    </location>
</feature>
<feature type="mutagenesis site" description="Impairs transporter activity." evidence="15">
    <original>L</original>
    <variation>S</variation>
    <location>
        <position position="250"/>
    </location>
</feature>
<feature type="mutagenesis site" description="Impairs transporter activity." evidence="15">
    <original>K</original>
    <variation>A</variation>
    <location>
        <position position="252"/>
    </location>
</feature>
<feature type="mutagenesis site" description="Impairs transporter activity. Impairs transporter activity and reduced sensitivity to NKCC inhibitor bumetanide; when associated with E-492 and C-671." evidence="15">
    <original>K</original>
    <variation>N</variation>
    <location>
        <position position="289"/>
    </location>
</feature>
<feature type="mutagenesis site" description="Severely impairs transporter activity." evidence="10">
    <original>R</original>
    <variation>A</variation>
    <location>
        <position position="294"/>
    </location>
</feature>
<feature type="mutagenesis site" description="Impairs transporter activity." evidence="15">
    <original>G</original>
    <variation>C</variation>
    <location>
        <position position="301"/>
    </location>
</feature>
<feature type="mutagenesis site" description="Abolished cation-chloride cotransporter activity." evidence="14">
    <original>R</original>
    <variation>E</variation>
    <location>
        <position position="307"/>
    </location>
</feature>
<feature type="mutagenesis site" description="Strongly reduced cation-chloride cotransporter activity." evidence="14">
    <original>R</original>
    <variation>K</variation>
    <location>
        <position position="358"/>
    </location>
</feature>
<feature type="mutagenesis site" description="Impairs transporter activity." evidence="16">
    <original>Y</original>
    <variation>F</variation>
    <variation>S</variation>
    <location>
        <position position="383"/>
    </location>
</feature>
<feature type="mutagenesis site" description="Strongly reduced cation-chloride cotransporter activity." evidence="14">
    <original>E</original>
    <variation>Q</variation>
    <variation>R</variation>
    <location>
        <position position="389"/>
    </location>
</feature>
<feature type="mutagenesis site" description="Impairs transporter activity." evidence="16">
    <original>E</original>
    <variation>A</variation>
    <location>
        <position position="429"/>
    </location>
</feature>
<feature type="mutagenesis site" description="Impairs transporter activity." evidence="16">
    <original>E</original>
    <variation>A</variation>
    <variation>Q</variation>
    <location>
        <position position="431"/>
    </location>
</feature>
<feature type="mutagenesis site" description="Strongly reduced cation-chloride cotransporter activity." evidence="14">
    <original>T</original>
    <variation>C</variation>
    <location>
        <position position="486"/>
    </location>
</feature>
<feature type="mutagenesis site" description="Impairs transporter activity." evidence="16">
    <original>F</original>
    <variation>A</variation>
    <location>
        <position position="487"/>
    </location>
</feature>
<feature type="mutagenesis site" description="Does not affect cation-chloride cotransporter activity." evidence="14">
    <original>F</original>
    <variation>C</variation>
    <location>
        <position position="487"/>
    </location>
</feature>
<feature type="mutagenesis site" description="Slighly reduced cation-chloride cotransporter activity." evidence="14">
    <original>F</original>
    <variation>C</variation>
    <location>
        <position position="488"/>
    </location>
</feature>
<feature type="mutagenesis site" description="Slighly reduced cation-chloride cotransporter activity." evidence="14">
    <original>S</original>
    <variation>C</variation>
    <location>
        <position position="489"/>
    </location>
</feature>
<feature type="mutagenesis site" description="Strongly reduced cation-chloride cotransporter activity." evidence="14">
    <original>V</original>
    <variation>C</variation>
    <location>
        <position position="490"/>
    </location>
</feature>
<feature type="mutagenesis site" description="Reduced cation-chloride cotransporter activity." evidence="14">
    <original>F</original>
    <variation>C</variation>
    <location>
        <position position="491"/>
    </location>
</feature>
<feature type="mutagenesis site" description="Reduced cation-chloride cotransporter activity." evidence="14">
    <original>A</original>
    <variation>C</variation>
    <location>
        <position position="492"/>
    </location>
</feature>
<feature type="mutagenesis site" description="Active at elevated intracellular chloride concentrations that are inhibitory to wild-type. Impairs transporter activity. Impairs transporter activity and reduced sensitivity to NKCC inhibitor bumetanide; when associated with N-289 and C-671." evidence="15">
    <original>A</original>
    <variation>E</variation>
    <location>
        <position position="492"/>
    </location>
</feature>
<feature type="mutagenesis site" description="Reduced cation-chloride cotransporter activity." evidence="14">
    <original>I</original>
    <variation>C</variation>
    <location>
        <position position="493"/>
    </location>
</feature>
<feature type="mutagenesis site" description="Reduced cation-chloride cotransporter activity." evidence="14">
    <original>F</original>
    <variation>C</variation>
    <location>
        <position position="494"/>
    </location>
</feature>
<feature type="mutagenesis site" description="Reduced cation-chloride cotransporter activity." evidence="14">
    <original>F</original>
    <variation>C</variation>
    <location>
        <position position="495"/>
    </location>
</feature>
<feature type="mutagenesis site" description="Strongly reduced cation-chloride cotransporter activity." evidence="14">
    <original>A</original>
    <variation>C</variation>
    <location>
        <position position="497"/>
    </location>
</feature>
<feature type="mutagenesis site" description="Strongly reduced cation-chloride cotransporter activity." evidence="14">
    <original>A</original>
    <variation>C</variation>
    <location>
        <position position="498"/>
    </location>
</feature>
<feature type="mutagenesis site" description="Strongly reduced cation-chloride cotransporter activity." evidence="14 15">
    <original>T</original>
    <variation>C</variation>
    <location>
        <position position="499"/>
    </location>
</feature>
<feature type="mutagenesis site" description="Strongly reduced cation-chloride cotransporter activity." evidence="14">
    <original>G</original>
    <variation>C</variation>
    <location>
        <position position="500"/>
    </location>
</feature>
<feature type="mutagenesis site" description="Strongly reduced cation-chloride cotransporter activity." evidence="14">
    <original>I</original>
    <variation>C</variation>
    <location>
        <position position="501"/>
    </location>
</feature>
<feature type="mutagenesis site" description="Strongly reduced cation-chloride cotransporter activity." evidence="14">
    <original>L</original>
    <variation>C</variation>
    <location>
        <position position="502"/>
    </location>
</feature>
<feature type="mutagenesis site" description="Reduced cation-chloride cotransporter activity." evidence="14">
    <original>A</original>
    <variation>C</variation>
    <location>
        <position position="503"/>
    </location>
</feature>
<feature type="mutagenesis site" description="Strongly reduced cation-chloride cotransporter activity." evidence="14">
    <original>G</original>
    <variation>C</variation>
    <location>
        <position position="504"/>
    </location>
</feature>
<feature type="mutagenesis site" description="Strongly reduced cation-chloride cotransporter activity." evidence="14">
    <original>A</original>
    <variation>C</variation>
    <location>
        <position position="505"/>
    </location>
</feature>
<feature type="mutagenesis site" description="Strongly reduced cation-chloride cotransporter activity." evidence="14">
    <original>N</original>
    <variation>C</variation>
    <location>
        <position position="506"/>
    </location>
</feature>
<feature type="mutagenesis site" description="Strongly reduced cation-chloride cotransporter activity." evidence="14">
    <original>I</original>
    <variation>C</variation>
    <location>
        <position position="507"/>
    </location>
</feature>
<feature type="mutagenesis site" description="Strongly reduced cation-chloride cotransporter activity." evidence="14">
    <original>D</original>
    <variation>A</variation>
    <variation>C</variation>
    <variation>Q</variation>
    <variation>K</variation>
    <location>
        <position position="510"/>
    </location>
</feature>
<feature type="mutagenesis site" description="Does not affect cation-chloride cotransporter activity." evidence="14">
    <original>D</original>
    <variation>N</variation>
    <location>
        <position position="510"/>
    </location>
</feature>
<feature type="mutagenesis site" description="Impairs transporter activity." evidence="16">
    <original>Y</original>
    <variation>F</variation>
    <variation>E</variation>
    <location>
        <position position="533"/>
    </location>
</feature>
<feature type="mutagenesis site" description="Abolished cation-chloride cotransporter activity." evidence="14">
    <original>S</original>
    <variation>C</variation>
    <variation>A</variation>
    <variation>D</variation>
    <variation>T</variation>
    <location>
        <position position="613"/>
    </location>
</feature>
<feature type="mutagenesis site" description="Abolished cation-chloride cotransporter activity." evidence="14">
    <original>S</original>
    <variation>C</variation>
    <variation>A</variation>
    <variation>D</variation>
    <variation>T</variation>
    <location>
        <position position="614"/>
    </location>
</feature>
<feature type="mutagenesis site" description="Nearly abolished cation-chloride cotransporter activity." evidence="14">
    <original>K</original>
    <variation>A</variation>
    <variation>C</variation>
    <variation>D</variation>
    <location>
        <position position="624"/>
    </location>
</feature>
<feature type="mutagenesis site" description="Strongly reduced cation-chloride cotransporter activity." evidence="14">
    <original>D</original>
    <variation>A</variation>
    <variation>E</variation>
    <location>
        <position position="632"/>
    </location>
</feature>
<feature type="mutagenesis site" description="Slightly reduced cation-chloride cotransporter activity." evidence="14">
    <original>E</original>
    <variation>A</variation>
    <variation>C</variation>
    <location>
        <position position="670"/>
    </location>
</feature>
<feature type="mutagenesis site" description="Reduced cation-chloride cotransporter activity." evidence="14">
    <original>L</original>
    <variation>A</variation>
    <variation>C</variation>
    <location>
        <position position="671"/>
    </location>
</feature>
<feature type="mutagenesis site" description="Active at elevated intracellular chloride concentrations that are inhibitory to wild-type. Impairs transporter activity. Impairs transporter activity and reduced sensitivity to NKCC inhibitor bumetanide; when associated with N-289 and E-492." evidence="15">
    <original>L</original>
    <variation>C</variation>
    <location>
        <position position="671"/>
    </location>
</feature>
<feature type="mutagenesis site" description="Impairs transporter activity." evidence="15">
    <original>F</original>
    <variation>C</variation>
    <location>
        <position position="682"/>
    </location>
</feature>
<feature type="mutagenesis site" description="Impairs transporter activity." evidence="16">
    <original>Y</original>
    <variation>S</variation>
    <variation>E</variation>
    <location>
        <position position="686"/>
    </location>
</feature>
<feature type="mutagenesis site" description="Impairs transporter activity." evidence="15">
    <original>D</original>
    <variation>A</variation>
    <location>
        <position position="1031"/>
    </location>
</feature>
<feature type="mutagenesis site" description="Impairs transporter activity." evidence="15">
    <original>R</original>
    <variation>A</variation>
    <location>
        <position position="1174"/>
    </location>
</feature>
<feature type="mutagenesis site" description="Impairs transporter activity." evidence="15">
    <original>R</original>
    <variation>A</variation>
    <location>
        <position position="1201"/>
    </location>
</feature>
<feature type="helix" evidence="43">
    <location>
        <begin position="224"/>
        <end position="227"/>
    </location>
</feature>
<feature type="helix" evidence="43">
    <location>
        <begin position="243"/>
        <end position="247"/>
    </location>
</feature>
<feature type="helix" evidence="45">
    <location>
        <begin position="287"/>
        <end position="290"/>
    </location>
</feature>
<feature type="helix" evidence="45">
    <location>
        <begin position="292"/>
        <end position="299"/>
    </location>
</feature>
<feature type="strand" evidence="45">
    <location>
        <begin position="300"/>
        <end position="302"/>
    </location>
</feature>
<feature type="helix" evidence="45">
    <location>
        <begin position="303"/>
        <end position="306"/>
    </location>
</feature>
<feature type="helix" evidence="45">
    <location>
        <begin position="308"/>
        <end position="314"/>
    </location>
</feature>
<feature type="helix" evidence="45">
    <location>
        <begin position="317"/>
        <end position="342"/>
    </location>
</feature>
<feature type="strand" evidence="43">
    <location>
        <begin position="344"/>
        <end position="346"/>
    </location>
</feature>
<feature type="helix" evidence="45">
    <location>
        <begin position="352"/>
        <end position="359"/>
    </location>
</feature>
<feature type="helix" evidence="45">
    <location>
        <begin position="362"/>
        <end position="397"/>
    </location>
</feature>
<feature type="helix" evidence="45">
    <location>
        <begin position="405"/>
        <end position="426"/>
    </location>
</feature>
<feature type="strand" evidence="41">
    <location>
        <begin position="428"/>
        <end position="430"/>
    </location>
</feature>
<feature type="helix" evidence="45">
    <location>
        <begin position="431"/>
        <end position="453"/>
    </location>
</feature>
<feature type="turn" evidence="45">
    <location>
        <begin position="458"/>
        <end position="460"/>
    </location>
</feature>
<feature type="helix" evidence="45">
    <location>
        <begin position="461"/>
        <end position="463"/>
    </location>
</feature>
<feature type="helix" evidence="45">
    <location>
        <begin position="470"/>
        <end position="476"/>
    </location>
</feature>
<feature type="strand" evidence="42">
    <location>
        <begin position="482"/>
        <end position="484"/>
    </location>
</feature>
<feature type="helix" evidence="45">
    <location>
        <begin position="487"/>
        <end position="498"/>
    </location>
</feature>
<feature type="helix" evidence="45">
    <location>
        <begin position="503"/>
        <end position="506"/>
    </location>
</feature>
<feature type="helix" evidence="45">
    <location>
        <begin position="507"/>
        <end position="510"/>
    </location>
</feature>
<feature type="strand" evidence="45">
    <location>
        <begin position="511"/>
        <end position="513"/>
    </location>
</feature>
<feature type="helix" evidence="45">
    <location>
        <begin position="514"/>
        <end position="543"/>
    </location>
</feature>
<feature type="strand" evidence="43">
    <location>
        <begin position="546"/>
        <end position="548"/>
    </location>
</feature>
<feature type="helix" evidence="44">
    <location>
        <begin position="552"/>
        <end position="554"/>
    </location>
</feature>
<feature type="turn" evidence="41">
    <location>
        <begin position="556"/>
        <end position="558"/>
    </location>
</feature>
<feature type="helix" evidence="45">
    <location>
        <begin position="566"/>
        <end position="569"/>
    </location>
</feature>
<feature type="helix" evidence="45">
    <location>
        <begin position="575"/>
        <end position="579"/>
    </location>
</feature>
<feature type="strand" evidence="45">
    <location>
        <begin position="583"/>
        <end position="585"/>
    </location>
</feature>
<feature type="turn" evidence="45">
    <location>
        <begin position="586"/>
        <end position="588"/>
    </location>
</feature>
<feature type="helix" evidence="45">
    <location>
        <begin position="592"/>
        <end position="596"/>
    </location>
</feature>
<feature type="strand" evidence="45">
    <location>
        <begin position="597"/>
        <end position="599"/>
    </location>
</feature>
<feature type="helix" evidence="45">
    <location>
        <begin position="600"/>
        <end position="631"/>
    </location>
</feature>
<feature type="helix" evidence="45">
    <location>
        <begin position="636"/>
        <end position="642"/>
    </location>
</feature>
<feature type="turn" evidence="45">
    <location>
        <begin position="646"/>
        <end position="649"/>
    </location>
</feature>
<feature type="helix" evidence="45">
    <location>
        <begin position="652"/>
        <end position="667"/>
    </location>
</feature>
<feature type="helix" evidence="45">
    <location>
        <begin position="671"/>
        <end position="699"/>
    </location>
</feature>
<feature type="helix" evidence="45">
    <location>
        <begin position="713"/>
        <end position="730"/>
    </location>
</feature>
<feature type="helix" evidence="45">
    <location>
        <begin position="732"/>
        <end position="750"/>
    </location>
</feature>
<feature type="strand" evidence="42">
    <location>
        <begin position="755"/>
        <end position="757"/>
    </location>
</feature>
<feature type="helix" evidence="43">
    <location>
        <begin position="761"/>
        <end position="778"/>
    </location>
</feature>
<feature type="helix" evidence="43">
    <location>
        <begin position="784"/>
        <end position="786"/>
    </location>
</feature>
<feature type="strand" evidence="43">
    <location>
        <begin position="791"/>
        <end position="793"/>
    </location>
</feature>
<feature type="turn" evidence="43">
    <location>
        <begin position="798"/>
        <end position="800"/>
    </location>
</feature>
<feature type="helix" evidence="43">
    <location>
        <begin position="802"/>
        <end position="810"/>
    </location>
</feature>
<feature type="turn" evidence="43">
    <location>
        <begin position="811"/>
        <end position="814"/>
    </location>
</feature>
<feature type="strand" evidence="43">
    <location>
        <begin position="818"/>
        <end position="824"/>
    </location>
</feature>
<feature type="helix" evidence="43">
    <location>
        <begin position="828"/>
        <end position="848"/>
    </location>
</feature>
<feature type="strand" evidence="43">
    <location>
        <begin position="854"/>
        <end position="859"/>
    </location>
</feature>
<feature type="helix" evidence="43">
    <location>
        <begin position="863"/>
        <end position="873"/>
    </location>
</feature>
<feature type="strand" evidence="46">
    <location>
        <begin position="874"/>
        <end position="876"/>
    </location>
</feature>
<feature type="strand" evidence="43">
    <location>
        <begin position="883"/>
        <end position="887"/>
    </location>
</feature>
<feature type="turn" evidence="43">
    <location>
        <begin position="890"/>
        <end position="894"/>
    </location>
</feature>
<feature type="helix" evidence="43">
    <location>
        <begin position="897"/>
        <end position="912"/>
    </location>
</feature>
<feature type="strand" evidence="43">
    <location>
        <begin position="916"/>
        <end position="921"/>
    </location>
</feature>
<feature type="strand" evidence="41">
    <location>
        <begin position="1019"/>
        <end position="1022"/>
    </location>
</feature>
<feature type="strand" evidence="43">
    <location>
        <begin position="1025"/>
        <end position="1027"/>
    </location>
</feature>
<feature type="helix" evidence="43">
    <location>
        <begin position="1035"/>
        <end position="1045"/>
    </location>
</feature>
<feature type="turn" evidence="43">
    <location>
        <begin position="1047"/>
        <end position="1049"/>
    </location>
</feature>
<feature type="strand" evidence="43">
    <location>
        <begin position="1050"/>
        <end position="1053"/>
    </location>
</feature>
<feature type="strand" evidence="43">
    <location>
        <begin position="1056"/>
        <end position="1059"/>
    </location>
</feature>
<feature type="helix" evidence="43">
    <location>
        <begin position="1065"/>
        <end position="1078"/>
    </location>
</feature>
<feature type="strand" evidence="43">
    <location>
        <begin position="1086"/>
        <end position="1089"/>
    </location>
</feature>
<feature type="strand" evidence="44">
    <location>
        <begin position="1092"/>
        <end position="1094"/>
    </location>
</feature>
<feature type="helix" evidence="43">
    <location>
        <begin position="1098"/>
        <end position="1108"/>
    </location>
</feature>
<feature type="helix" evidence="43">
    <location>
        <begin position="1109"/>
        <end position="1111"/>
    </location>
</feature>
<feature type="turn" evidence="43">
    <location>
        <begin position="1113"/>
        <end position="1116"/>
    </location>
</feature>
<feature type="helix" evidence="43">
    <location>
        <begin position="1121"/>
        <end position="1127"/>
    </location>
</feature>
<feature type="strand" evidence="44">
    <location>
        <begin position="1133"/>
        <end position="1135"/>
    </location>
</feature>
<feature type="helix" evidence="43">
    <location>
        <begin position="1137"/>
        <end position="1139"/>
    </location>
</feature>
<feature type="helix" evidence="43">
    <location>
        <begin position="1142"/>
        <end position="1159"/>
    </location>
</feature>
<feature type="helix" evidence="43">
    <location>
        <begin position="1160"/>
        <end position="1162"/>
    </location>
</feature>
<feature type="strand" evidence="43">
    <location>
        <begin position="1166"/>
        <end position="1169"/>
    </location>
</feature>
<feature type="turn" evidence="43">
    <location>
        <begin position="1175"/>
        <end position="1177"/>
    </location>
</feature>
<feature type="helix" evidence="43">
    <location>
        <begin position="1180"/>
        <end position="1191"/>
    </location>
</feature>
<feature type="strand" evidence="43">
    <location>
        <begin position="1192"/>
        <end position="1195"/>
    </location>
</feature>
<feature type="strand" evidence="43">
    <location>
        <begin position="1197"/>
        <end position="1201"/>
    </location>
</feature>
<gene>
    <name type="primary">SLC12A2</name>
    <name evidence="20 22" type="synonym">NKCC1</name>
</gene>
<organism>
    <name type="scientific">Homo sapiens</name>
    <name type="common">Human</name>
    <dbReference type="NCBI Taxonomy" id="9606"/>
    <lineage>
        <taxon>Eukaryota</taxon>
        <taxon>Metazoa</taxon>
        <taxon>Chordata</taxon>
        <taxon>Craniata</taxon>
        <taxon>Vertebrata</taxon>
        <taxon>Euteleostomi</taxon>
        <taxon>Mammalia</taxon>
        <taxon>Eutheria</taxon>
        <taxon>Euarchontoglires</taxon>
        <taxon>Primates</taxon>
        <taxon>Haplorrhini</taxon>
        <taxon>Catarrhini</taxon>
        <taxon>Hominidae</taxon>
        <taxon>Homo</taxon>
    </lineage>
</organism>
<protein>
    <recommendedName>
        <fullName>Solute carrier family 12 member 2</fullName>
    </recommendedName>
    <alternativeName>
        <fullName>Basolateral Na-K-Cl symporter</fullName>
    </alternativeName>
    <alternativeName>
        <fullName>Bumetanide-sensitive sodium-(potassium)-chloride cotransporter 2</fullName>
        <shortName>BSC2</shortName>
    </alternativeName>
    <alternativeName>
        <fullName evidence="21">Na-K-2Cl cotransporter 1</fullName>
        <shortName evidence="21">hNKCC1</shortName>
    </alternativeName>
</protein>
<dbReference type="EMBL" id="U30246">
    <property type="protein sequence ID" value="AAC50561.1"/>
    <property type="molecule type" value="mRNA"/>
</dbReference>
<dbReference type="EMBL" id="AF439152">
    <property type="protein sequence ID" value="AAL32454.1"/>
    <property type="molecule type" value="mRNA"/>
</dbReference>
<dbReference type="CCDS" id="CCDS4144.1">
    <molecule id="P55011-1"/>
</dbReference>
<dbReference type="CCDS" id="CCDS58965.1">
    <molecule id="P55011-3"/>
</dbReference>
<dbReference type="PIR" id="A57187">
    <property type="entry name" value="A57187"/>
</dbReference>
<dbReference type="RefSeq" id="NP_001037.1">
    <molecule id="P55011-1"/>
    <property type="nucleotide sequence ID" value="NM_001046.3"/>
</dbReference>
<dbReference type="RefSeq" id="NP_001243390.1">
    <molecule id="P55011-3"/>
    <property type="nucleotide sequence ID" value="NM_001256461.2"/>
</dbReference>
<dbReference type="PDB" id="6PZT">
    <property type="method" value="EM"/>
    <property type="resolution" value="3.46 A"/>
    <property type="chains" value="A/B=1-1212"/>
</dbReference>
<dbReference type="PDB" id="7D10">
    <property type="method" value="EM"/>
    <property type="resolution" value="3.52 A"/>
    <property type="chains" value="A/B=1-1212"/>
</dbReference>
<dbReference type="PDB" id="7MXO">
    <property type="method" value="EM"/>
    <property type="resolution" value="3.47 A"/>
    <property type="chains" value="A/B=284-1206"/>
</dbReference>
<dbReference type="PDB" id="7N3N">
    <property type="method" value="EM"/>
    <property type="resolution" value="3.33 A"/>
    <property type="chains" value="A/B=1-1212"/>
</dbReference>
<dbReference type="PDB" id="7S1X">
    <property type="method" value="EM"/>
    <property type="resolution" value="2.90 A"/>
    <property type="chains" value="A/B=2-1212"/>
</dbReference>
<dbReference type="PDB" id="7S1Y">
    <property type="method" value="EM"/>
    <property type="resolution" value="3.60 A"/>
    <property type="chains" value="A/B=2-1212"/>
</dbReference>
<dbReference type="PDB" id="7S1Z">
    <property type="method" value="EM"/>
    <property type="resolution" value="3.30 A"/>
    <property type="chains" value="A/B=2-1212"/>
</dbReference>
<dbReference type="PDB" id="7SFL">
    <property type="method" value="EM"/>
    <property type="resolution" value="3.87 A"/>
    <property type="chains" value="A/B=286-1210"/>
</dbReference>
<dbReference type="PDB" id="7SMP">
    <property type="method" value="EM"/>
    <property type="resolution" value="3.28 A"/>
    <property type="chains" value="A/B=283-1211"/>
</dbReference>
<dbReference type="PDB" id="7ZGO">
    <property type="method" value="EM"/>
    <property type="resolution" value="2.55 A"/>
    <property type="chains" value="A/B=2-1212"/>
</dbReference>
<dbReference type="PDB" id="8STE">
    <property type="method" value="EM"/>
    <property type="resolution" value="3.34 A"/>
    <property type="chains" value="A/B=760-1210"/>
</dbReference>
<dbReference type="PDB" id="9C0E">
    <property type="method" value="EM"/>
    <property type="resolution" value="2.70 A"/>
    <property type="chains" value="A/B=1-1212"/>
</dbReference>
<dbReference type="PDB" id="9C0G">
    <property type="method" value="EM"/>
    <property type="resolution" value="2.60 A"/>
    <property type="chains" value="A/B=1-1212"/>
</dbReference>
<dbReference type="PDB" id="9C0H">
    <property type="method" value="EM"/>
    <property type="resolution" value="2.50 A"/>
    <property type="chains" value="A/B=1-1212"/>
</dbReference>
<dbReference type="PDBsum" id="6PZT"/>
<dbReference type="PDBsum" id="7D10"/>
<dbReference type="PDBsum" id="7MXO"/>
<dbReference type="PDBsum" id="7N3N"/>
<dbReference type="PDBsum" id="7S1X"/>
<dbReference type="PDBsum" id="7S1Y"/>
<dbReference type="PDBsum" id="7S1Z"/>
<dbReference type="PDBsum" id="7SFL"/>
<dbReference type="PDBsum" id="7SMP"/>
<dbReference type="PDBsum" id="7ZGO"/>
<dbReference type="PDBsum" id="8STE"/>
<dbReference type="PDBsum" id="9C0E"/>
<dbReference type="PDBsum" id="9C0G"/>
<dbReference type="PDBsum" id="9C0H"/>
<dbReference type="EMDB" id="EMD-14709"/>
<dbReference type="EMDB" id="EMD-20537"/>
<dbReference type="EMDB" id="EMD-24074"/>
<dbReference type="EMDB" id="EMD-24141"/>
<dbReference type="EMDB" id="EMD-24807"/>
<dbReference type="EMDB" id="EMD-24812"/>
<dbReference type="EMDB" id="EMD-24813"/>
<dbReference type="EMDB" id="EMD-25092"/>
<dbReference type="EMDB" id="EMD-25204"/>
<dbReference type="EMDB" id="EMD-30542"/>
<dbReference type="EMDB" id="EMD-45081"/>
<dbReference type="EMDB" id="EMD-45083"/>
<dbReference type="EMDB" id="EMD-45084"/>
<dbReference type="SMR" id="P55011"/>
<dbReference type="BioGRID" id="112447">
    <property type="interactions" value="247"/>
</dbReference>
<dbReference type="CORUM" id="P55011"/>
<dbReference type="DIP" id="DIP-43979N"/>
<dbReference type="FunCoup" id="P55011">
    <property type="interactions" value="1050"/>
</dbReference>
<dbReference type="IntAct" id="P55011">
    <property type="interactions" value="78"/>
</dbReference>
<dbReference type="MINT" id="P55011"/>
<dbReference type="STRING" id="9606.ENSP00000262461"/>
<dbReference type="BindingDB" id="P55011"/>
<dbReference type="ChEMBL" id="CHEMBL1615383"/>
<dbReference type="DrugBank" id="DB00887">
    <property type="generic name" value="Bumetanide"/>
</dbReference>
<dbReference type="DrugBank" id="DB11098">
    <property type="generic name" value="Potassium bicarbonate"/>
</dbReference>
<dbReference type="DrugBank" id="DB00761">
    <property type="generic name" value="Potassium chloride"/>
</dbReference>
<dbReference type="DrugBank" id="DB01325">
    <property type="generic name" value="Quinethazone"/>
</dbReference>
<dbReference type="DrugBank" id="DB00214">
    <property type="generic name" value="Torasemide"/>
</dbReference>
<dbReference type="DrugCentral" id="P55011"/>
<dbReference type="GuidetoPHARMACOLOGY" id="969"/>
<dbReference type="TCDB" id="2.A.30.1.4">
    <property type="family name" value="the cation-chloride cotransporter (ccc) family"/>
</dbReference>
<dbReference type="GlyConnect" id="1761">
    <property type="glycosylation" value="3 N-Linked glycans (1 site)"/>
</dbReference>
<dbReference type="GlyCosmos" id="P55011">
    <property type="glycosylation" value="1 site, 3 glycans"/>
</dbReference>
<dbReference type="GlyGen" id="P55011">
    <property type="glycosylation" value="5 sites, 5 N-linked glycans (2 sites), 1 O-linked glycan (1 site)"/>
</dbReference>
<dbReference type="iPTMnet" id="P55011"/>
<dbReference type="PhosphoSitePlus" id="P55011"/>
<dbReference type="SwissPalm" id="P55011"/>
<dbReference type="BioMuta" id="SLC12A2"/>
<dbReference type="DMDM" id="1709292"/>
<dbReference type="jPOST" id="P55011"/>
<dbReference type="MassIVE" id="P55011"/>
<dbReference type="PaxDb" id="9606-ENSP00000262461"/>
<dbReference type="PeptideAtlas" id="P55011"/>
<dbReference type="ProteomicsDB" id="56757">
    <molecule id="P55011-1"/>
</dbReference>
<dbReference type="ProteomicsDB" id="56758">
    <molecule id="P55011-3"/>
</dbReference>
<dbReference type="Pumba" id="P55011"/>
<dbReference type="Antibodypedia" id="14071">
    <property type="antibodies" value="366 antibodies from 39 providers"/>
</dbReference>
<dbReference type="DNASU" id="6558"/>
<dbReference type="Ensembl" id="ENST00000262461.7">
    <molecule id="P55011-1"/>
    <property type="protein sequence ID" value="ENSP00000262461.2"/>
    <property type="gene ID" value="ENSG00000064651.14"/>
</dbReference>
<dbReference type="Ensembl" id="ENST00000343225.4">
    <molecule id="P55011-3"/>
    <property type="protein sequence ID" value="ENSP00000340878.4"/>
    <property type="gene ID" value="ENSG00000064651.14"/>
</dbReference>
<dbReference type="GeneID" id="6558"/>
<dbReference type="KEGG" id="hsa:6558"/>
<dbReference type="MANE-Select" id="ENST00000262461.7">
    <property type="protein sequence ID" value="ENSP00000262461.2"/>
    <property type="RefSeq nucleotide sequence ID" value="NM_001046.3"/>
    <property type="RefSeq protein sequence ID" value="NP_001037.1"/>
</dbReference>
<dbReference type="UCSC" id="uc010jdg.4">
    <molecule id="P55011-1"/>
    <property type="organism name" value="human"/>
</dbReference>
<dbReference type="AGR" id="HGNC:10911"/>
<dbReference type="CTD" id="6558"/>
<dbReference type="DisGeNET" id="6558"/>
<dbReference type="GeneCards" id="SLC12A2"/>
<dbReference type="HGNC" id="HGNC:10911">
    <property type="gene designation" value="SLC12A2"/>
</dbReference>
<dbReference type="HPA" id="ENSG00000064651">
    <property type="expression patterns" value="Tissue enhanced (salivary)"/>
</dbReference>
<dbReference type="MalaCards" id="SLC12A2"/>
<dbReference type="MIM" id="600840">
    <property type="type" value="gene"/>
</dbReference>
<dbReference type="MIM" id="619080">
    <property type="type" value="phenotype"/>
</dbReference>
<dbReference type="MIM" id="619081">
    <property type="type" value="phenotype"/>
</dbReference>
<dbReference type="MIM" id="619083">
    <property type="type" value="phenotype"/>
</dbReference>
<dbReference type="neXtProt" id="NX_P55011"/>
<dbReference type="OpenTargets" id="ENSG00000064651"/>
<dbReference type="Orphanet" id="633024">
    <property type="disease" value="SLC12A2-related autosomal dominant infantile-developmental delay-intellectual disability-sensorineural deafness syndrome"/>
</dbReference>
<dbReference type="Orphanet" id="633021">
    <property type="disease" value="SLC12A2-related autosomal recessive neonatal-developmental delay-intellectual disability-feeding difficulty-sensorineural deafness syndrome"/>
</dbReference>
<dbReference type="PharmGKB" id="PA35806"/>
<dbReference type="VEuPathDB" id="HostDB:ENSG00000064651"/>
<dbReference type="eggNOG" id="KOG2083">
    <property type="taxonomic scope" value="Eukaryota"/>
</dbReference>
<dbReference type="GeneTree" id="ENSGT00940000155742"/>
<dbReference type="HOGENOM" id="CLU_001883_0_0_1"/>
<dbReference type="InParanoid" id="P55011"/>
<dbReference type="OMA" id="CTHITKK"/>
<dbReference type="OrthoDB" id="2020542at2759"/>
<dbReference type="PAN-GO" id="P55011">
    <property type="GO annotations" value="10 GO annotations based on evolutionary models"/>
</dbReference>
<dbReference type="PhylomeDB" id="P55011"/>
<dbReference type="TreeFam" id="TF313191"/>
<dbReference type="PathwayCommons" id="P55011"/>
<dbReference type="Reactome" id="R-HSA-426117">
    <property type="pathway name" value="Cation-coupled Chloride cotransporters"/>
</dbReference>
<dbReference type="SignaLink" id="P55011"/>
<dbReference type="SIGNOR" id="P55011"/>
<dbReference type="BioGRID-ORCS" id="6558">
    <property type="hits" value="19 hits in 1170 CRISPR screens"/>
</dbReference>
<dbReference type="CD-CODE" id="FB4E32DD">
    <property type="entry name" value="Presynaptic clusters and postsynaptic densities"/>
</dbReference>
<dbReference type="ChiTaRS" id="SLC12A2">
    <property type="organism name" value="human"/>
</dbReference>
<dbReference type="GenomeRNAi" id="6558"/>
<dbReference type="Pharos" id="P55011">
    <property type="development level" value="Tclin"/>
</dbReference>
<dbReference type="PRO" id="PR:P55011"/>
<dbReference type="Proteomes" id="UP000005640">
    <property type="component" value="Chromosome 5"/>
</dbReference>
<dbReference type="RNAct" id="P55011">
    <property type="molecule type" value="protein"/>
</dbReference>
<dbReference type="Bgee" id="ENSG00000064651">
    <property type="expression patterns" value="Expressed in palpebral conjunctiva and 192 other cell types or tissues"/>
</dbReference>
<dbReference type="ExpressionAtlas" id="P55011">
    <property type="expression patterns" value="baseline and differential"/>
</dbReference>
<dbReference type="GO" id="GO:0016324">
    <property type="term" value="C:apical plasma membrane"/>
    <property type="evidence" value="ECO:0000314"/>
    <property type="project" value="ARUK-UCL"/>
</dbReference>
<dbReference type="GO" id="GO:0009925">
    <property type="term" value="C:basal plasma membrane"/>
    <property type="evidence" value="ECO:0000314"/>
    <property type="project" value="ARUK-UCL"/>
</dbReference>
<dbReference type="GO" id="GO:0016323">
    <property type="term" value="C:basolateral plasma membrane"/>
    <property type="evidence" value="ECO:0000304"/>
    <property type="project" value="UniProt"/>
</dbReference>
<dbReference type="GO" id="GO:0044297">
    <property type="term" value="C:cell body"/>
    <property type="evidence" value="ECO:0000250"/>
    <property type="project" value="ARUK-UCL"/>
</dbReference>
<dbReference type="GO" id="GO:0044298">
    <property type="term" value="C:cell body membrane"/>
    <property type="evidence" value="ECO:0000304"/>
    <property type="project" value="ARUK-UCL"/>
</dbReference>
<dbReference type="GO" id="GO:0071944">
    <property type="term" value="C:cell periphery"/>
    <property type="evidence" value="ECO:0000314"/>
    <property type="project" value="ARUK-UCL"/>
</dbReference>
<dbReference type="GO" id="GO:0042995">
    <property type="term" value="C:cell projection"/>
    <property type="evidence" value="ECO:0000250"/>
    <property type="project" value="ARUK-UCL"/>
</dbReference>
<dbReference type="GO" id="GO:0031253">
    <property type="term" value="C:cell projection membrane"/>
    <property type="evidence" value="ECO:0000304"/>
    <property type="project" value="ARUK-UCL"/>
</dbReference>
<dbReference type="GO" id="GO:0030659">
    <property type="term" value="C:cytoplasmic vesicle membrane"/>
    <property type="evidence" value="ECO:0000314"/>
    <property type="project" value="ARUK-UCL"/>
</dbReference>
<dbReference type="GO" id="GO:0070062">
    <property type="term" value="C:extracellular exosome"/>
    <property type="evidence" value="ECO:0007005"/>
    <property type="project" value="UniProtKB"/>
</dbReference>
<dbReference type="GO" id="GO:1903561">
    <property type="term" value="C:extracellular vesicle"/>
    <property type="evidence" value="ECO:0007005"/>
    <property type="project" value="UniProtKB"/>
</dbReference>
<dbReference type="GO" id="GO:0016328">
    <property type="term" value="C:lateral plasma membrane"/>
    <property type="evidence" value="ECO:0000314"/>
    <property type="project" value="ARUK-UCL"/>
</dbReference>
<dbReference type="GO" id="GO:0016020">
    <property type="term" value="C:membrane"/>
    <property type="evidence" value="ECO:0000304"/>
    <property type="project" value="ProtInc"/>
</dbReference>
<dbReference type="GO" id="GO:0043005">
    <property type="term" value="C:neuron projection"/>
    <property type="evidence" value="ECO:0000314"/>
    <property type="project" value="ARUK-UCL"/>
</dbReference>
<dbReference type="GO" id="GO:0043025">
    <property type="term" value="C:neuronal cell body"/>
    <property type="evidence" value="ECO:0000314"/>
    <property type="project" value="ARUK-UCL"/>
</dbReference>
<dbReference type="GO" id="GO:0005886">
    <property type="term" value="C:plasma membrane"/>
    <property type="evidence" value="ECO:0000314"/>
    <property type="project" value="ARUK-UCL"/>
</dbReference>
<dbReference type="GO" id="GO:0008519">
    <property type="term" value="F:ammonium channel activity"/>
    <property type="evidence" value="ECO:0000314"/>
    <property type="project" value="UniProtKB"/>
</dbReference>
<dbReference type="GO" id="GO:0015377">
    <property type="term" value="F:chloride:monoatomic cation symporter activity"/>
    <property type="evidence" value="ECO:0000314"/>
    <property type="project" value="ARUK-UCL"/>
</dbReference>
<dbReference type="GO" id="GO:0051879">
    <property type="term" value="F:Hsp90 protein binding"/>
    <property type="evidence" value="ECO:0000353"/>
    <property type="project" value="ARUK-UCL"/>
</dbReference>
<dbReference type="GO" id="GO:0046873">
    <property type="term" value="F:metal ion transmembrane transporter activity"/>
    <property type="evidence" value="ECO:0000314"/>
    <property type="project" value="ARUK-UCL"/>
</dbReference>
<dbReference type="GO" id="GO:0015079">
    <property type="term" value="F:potassium ion transmembrane transporter activity"/>
    <property type="evidence" value="ECO:0000250"/>
    <property type="project" value="ARUK-UCL"/>
</dbReference>
<dbReference type="GO" id="GO:0019901">
    <property type="term" value="F:protein kinase binding"/>
    <property type="evidence" value="ECO:0000353"/>
    <property type="project" value="ParkinsonsUK-UCL"/>
</dbReference>
<dbReference type="GO" id="GO:0051087">
    <property type="term" value="F:protein-folding chaperone binding"/>
    <property type="evidence" value="ECO:0000353"/>
    <property type="project" value="ARUK-UCL"/>
</dbReference>
<dbReference type="GO" id="GO:0008511">
    <property type="term" value="F:sodium:potassium:chloride symporter activity"/>
    <property type="evidence" value="ECO:0000314"/>
    <property type="project" value="UniProtKB"/>
</dbReference>
<dbReference type="GO" id="GO:0072488">
    <property type="term" value="P:ammonium transmembrane transport"/>
    <property type="evidence" value="ECO:0000314"/>
    <property type="project" value="UniProtKB"/>
</dbReference>
<dbReference type="GO" id="GO:0006884">
    <property type="term" value="P:cell volume homeostasis"/>
    <property type="evidence" value="ECO:0000250"/>
    <property type="project" value="ARUK-UCL"/>
</dbReference>
<dbReference type="GO" id="GO:1990869">
    <property type="term" value="P:cellular response to chemokine"/>
    <property type="evidence" value="ECO:0000315"/>
    <property type="project" value="BHF-UCL"/>
</dbReference>
<dbReference type="GO" id="GO:0035865">
    <property type="term" value="P:cellular response to potassium ion"/>
    <property type="evidence" value="ECO:0000250"/>
    <property type="project" value="ARUK-UCL"/>
</dbReference>
<dbReference type="GO" id="GO:0055064">
    <property type="term" value="P:chloride ion homeostasis"/>
    <property type="evidence" value="ECO:0000318"/>
    <property type="project" value="GO_Central"/>
</dbReference>
<dbReference type="GO" id="GO:1902476">
    <property type="term" value="P:chloride transmembrane transport"/>
    <property type="evidence" value="ECO:0000250"/>
    <property type="project" value="ARUK-UCL"/>
</dbReference>
<dbReference type="GO" id="GO:0007214">
    <property type="term" value="P:gamma-aminobutyric acid signaling pathway"/>
    <property type="evidence" value="ECO:0000250"/>
    <property type="project" value="ARUK-UCL"/>
</dbReference>
<dbReference type="GO" id="GO:0006972">
    <property type="term" value="P:hyperosmotic response"/>
    <property type="evidence" value="ECO:0007669"/>
    <property type="project" value="Ensembl"/>
</dbReference>
<dbReference type="GO" id="GO:0098658">
    <property type="term" value="P:inorganic anion import across plasma membrane"/>
    <property type="evidence" value="ECO:0000250"/>
    <property type="project" value="ARUK-UCL"/>
</dbReference>
<dbReference type="GO" id="GO:0098659">
    <property type="term" value="P:inorganic cation import across plasma membrane"/>
    <property type="evidence" value="ECO:0000314"/>
    <property type="project" value="ARUK-UCL"/>
</dbReference>
<dbReference type="GO" id="GO:0030644">
    <property type="term" value="P:intracellular chloride ion homeostasis"/>
    <property type="evidence" value="ECO:0000250"/>
    <property type="project" value="ARUK-UCL"/>
</dbReference>
<dbReference type="GO" id="GO:0030007">
    <property type="term" value="P:intracellular potassium ion homeostasis"/>
    <property type="evidence" value="ECO:0000250"/>
    <property type="project" value="ARUK-UCL"/>
</dbReference>
<dbReference type="GO" id="GO:0006883">
    <property type="term" value="P:intracellular sodium ion homeostasis"/>
    <property type="evidence" value="ECO:0000250"/>
    <property type="project" value="ARUK-UCL"/>
</dbReference>
<dbReference type="GO" id="GO:0035633">
    <property type="term" value="P:maintenance of blood-brain barrier"/>
    <property type="evidence" value="ECO:0000250"/>
    <property type="project" value="ARUK-UCL"/>
</dbReference>
<dbReference type="GO" id="GO:0006811">
    <property type="term" value="P:monoatomic ion transport"/>
    <property type="evidence" value="ECO:0000304"/>
    <property type="project" value="Reactome"/>
</dbReference>
<dbReference type="GO" id="GO:0061044">
    <property type="term" value="P:negative regulation of vascular wound healing"/>
    <property type="evidence" value="ECO:0000250"/>
    <property type="project" value="ARUK-UCL"/>
</dbReference>
<dbReference type="GO" id="GO:1904450">
    <property type="term" value="P:positive regulation of aspartate secretion"/>
    <property type="evidence" value="ECO:0000250"/>
    <property type="project" value="ARUK-UCL"/>
</dbReference>
<dbReference type="GO" id="GO:0045795">
    <property type="term" value="P:positive regulation of cell volume"/>
    <property type="evidence" value="ECO:0007669"/>
    <property type="project" value="Ensembl"/>
</dbReference>
<dbReference type="GO" id="GO:0055075">
    <property type="term" value="P:potassium ion homeostasis"/>
    <property type="evidence" value="ECO:0000318"/>
    <property type="project" value="GO_Central"/>
</dbReference>
<dbReference type="GO" id="GO:1990573">
    <property type="term" value="P:potassium ion import across plasma membrane"/>
    <property type="evidence" value="ECO:0000250"/>
    <property type="project" value="ARUK-UCL"/>
</dbReference>
<dbReference type="GO" id="GO:1904464">
    <property type="term" value="P:regulation of matrix metallopeptidase secretion"/>
    <property type="evidence" value="ECO:0000250"/>
    <property type="project" value="ARUK-UCL"/>
</dbReference>
<dbReference type="GO" id="GO:0150003">
    <property type="term" value="P:regulation of spontaneous synaptic transmission"/>
    <property type="evidence" value="ECO:0000250"/>
    <property type="project" value="ARUK-UCL"/>
</dbReference>
<dbReference type="GO" id="GO:0055078">
    <property type="term" value="P:sodium ion homeostasis"/>
    <property type="evidence" value="ECO:0000318"/>
    <property type="project" value="GO_Central"/>
</dbReference>
<dbReference type="GO" id="GO:0098719">
    <property type="term" value="P:sodium ion import across plasma membrane"/>
    <property type="evidence" value="ECO:0000250"/>
    <property type="project" value="ARUK-UCL"/>
</dbReference>
<dbReference type="GO" id="GO:0035725">
    <property type="term" value="P:sodium ion transmembrane transport"/>
    <property type="evidence" value="ECO:0000318"/>
    <property type="project" value="GO_Central"/>
</dbReference>
<dbReference type="GO" id="GO:0010818">
    <property type="term" value="P:T cell chemotaxis"/>
    <property type="evidence" value="ECO:0000315"/>
    <property type="project" value="BHF-UCL"/>
</dbReference>
<dbReference type="GO" id="GO:0070634">
    <property type="term" value="P:transepithelial ammonium transport"/>
    <property type="evidence" value="ECO:0000314"/>
    <property type="project" value="UniProtKB"/>
</dbReference>
<dbReference type="GO" id="GO:0030321">
    <property type="term" value="P:transepithelial chloride transport"/>
    <property type="evidence" value="ECO:0000314"/>
    <property type="project" value="UniProtKB"/>
</dbReference>
<dbReference type="GO" id="GO:0150104">
    <property type="term" value="P:transport across blood-brain barrier"/>
    <property type="evidence" value="ECO:0000303"/>
    <property type="project" value="ARUK-UCL"/>
</dbReference>
<dbReference type="FunFam" id="1.20.1740.10:FF:000005">
    <property type="entry name" value="Solute carrier family 12 member 1"/>
    <property type="match status" value="1"/>
</dbReference>
<dbReference type="Gene3D" id="1.20.1740.10">
    <property type="entry name" value="Amino acid/polyamine transporter I"/>
    <property type="match status" value="1"/>
</dbReference>
<dbReference type="InterPro" id="IPR004841">
    <property type="entry name" value="AA-permease/SLC12A_dom"/>
</dbReference>
<dbReference type="InterPro" id="IPR013612">
    <property type="entry name" value="AA_permease_N"/>
</dbReference>
<dbReference type="InterPro" id="IPR002444">
    <property type="entry name" value="NKCC1"/>
</dbReference>
<dbReference type="InterPro" id="IPR018491">
    <property type="entry name" value="SLC12_C"/>
</dbReference>
<dbReference type="InterPro" id="IPR002443">
    <property type="entry name" value="SLC12A1/SLC12A2"/>
</dbReference>
<dbReference type="InterPro" id="IPR004842">
    <property type="entry name" value="SLC12A_fam"/>
</dbReference>
<dbReference type="NCBIfam" id="TIGR00930">
    <property type="entry name" value="2a30"/>
    <property type="match status" value="1"/>
</dbReference>
<dbReference type="PANTHER" id="PTHR11827:SF58">
    <property type="entry name" value="SOLUTE CARRIER FAMILY 12 MEMBER 2"/>
    <property type="match status" value="1"/>
</dbReference>
<dbReference type="PANTHER" id="PTHR11827">
    <property type="entry name" value="SOLUTE CARRIER FAMILY 12, CATION COTRANSPORTERS"/>
    <property type="match status" value="1"/>
</dbReference>
<dbReference type="Pfam" id="PF00324">
    <property type="entry name" value="AA_permease"/>
    <property type="match status" value="1"/>
</dbReference>
<dbReference type="Pfam" id="PF08403">
    <property type="entry name" value="AA_permease_N"/>
    <property type="match status" value="1"/>
</dbReference>
<dbReference type="Pfam" id="PF03522">
    <property type="entry name" value="SLC12"/>
    <property type="match status" value="1"/>
</dbReference>
<dbReference type="PRINTS" id="PR01207">
    <property type="entry name" value="NAKCLTRNSPRT"/>
</dbReference>
<dbReference type="PRINTS" id="PR01208">
    <property type="entry name" value="NAKCLTRSPRT1"/>
</dbReference>
<name>S12A2_HUMAN</name>
<proteinExistence type="evidence at protein level"/>